<protein>
    <recommendedName>
        <fullName>Transcription initiation factor IIB</fullName>
    </recommendedName>
    <alternativeName>
        <fullName>General transcription factor TFIIB</fullName>
    </alternativeName>
</protein>
<feature type="chain" id="PRO_0000119299" description="Transcription initiation factor IIB">
    <location>
        <begin position="1"/>
        <end position="315"/>
    </location>
</feature>
<feature type="repeat" description="1">
    <location>
        <begin position="123"/>
        <end position="199"/>
    </location>
</feature>
<feature type="repeat" description="2">
    <location>
        <begin position="217"/>
        <end position="293"/>
    </location>
</feature>
<feature type="zinc finger region" description="TFIIB-type" evidence="1">
    <location>
        <begin position="10"/>
        <end position="41"/>
    </location>
</feature>
<feature type="binding site" evidence="1">
    <location>
        <position position="14"/>
    </location>
    <ligand>
        <name>Zn(2+)</name>
        <dbReference type="ChEBI" id="CHEBI:29105"/>
    </ligand>
</feature>
<feature type="binding site" evidence="1">
    <location>
        <position position="17"/>
    </location>
    <ligand>
        <name>Zn(2+)</name>
        <dbReference type="ChEBI" id="CHEBI:29105"/>
    </ligand>
</feature>
<feature type="binding site" evidence="1">
    <location>
        <position position="33"/>
    </location>
    <ligand>
        <name>Zn(2+)</name>
        <dbReference type="ChEBI" id="CHEBI:29105"/>
    </ligand>
</feature>
<feature type="binding site" evidence="1">
    <location>
        <position position="36"/>
    </location>
    <ligand>
        <name>Zn(2+)</name>
        <dbReference type="ChEBI" id="CHEBI:29105"/>
    </ligand>
</feature>
<keyword id="KW-0479">Metal-binding</keyword>
<keyword id="KW-0539">Nucleus</keyword>
<keyword id="KW-1185">Reference proteome</keyword>
<keyword id="KW-0677">Repeat</keyword>
<keyword id="KW-0804">Transcription</keyword>
<keyword id="KW-0805">Transcription regulation</keyword>
<keyword id="KW-0862">Zinc</keyword>
<keyword id="KW-0863">Zinc-finger</keyword>
<sequence>MASTSRLDNNKVCCYAHPESPLIEDYRAGDMICSECGLVVGDRVIDVGSEWRTFSNEKSGVDPSRVGGPENPLLSGGDLSTIIGPGTGSASFDAFGAPKYQNRRTMSSSDRSLISAFKEISSMADRINLPKTIVDRANNLFKQVHDGKNLKGRSNDAKASACLYIACRQEGVPRTFKEICAVSKISKKEIGRCFKLTLKALETSVDLITTADFMCRFCANLDLPNMVQRAATHIAKKAVEMDIVPGRSPISVAAAAIYMASQASEHKRSQKEIGDIAGVADVTIRQSYKLMYPHAAKLFPEDFKFTTPIDQLPQM</sequence>
<dbReference type="EMBL" id="M88164">
    <property type="protein sequence ID" value="AAA28930.1"/>
    <property type="molecule type" value="mRNA"/>
</dbReference>
<dbReference type="EMBL" id="M91081">
    <property type="protein sequence ID" value="AAA28929.1"/>
    <property type="molecule type" value="mRNA"/>
</dbReference>
<dbReference type="EMBL" id="U02879">
    <property type="protein sequence ID" value="AAA68626.1"/>
    <property type="molecule type" value="Genomic_DNA"/>
</dbReference>
<dbReference type="EMBL" id="U35148">
    <property type="protein sequence ID" value="AAA79093.1"/>
    <property type="molecule type" value="Genomic_DNA"/>
</dbReference>
<dbReference type="EMBL" id="AE014134">
    <property type="protein sequence ID" value="AAF52951.1"/>
    <property type="molecule type" value="Genomic_DNA"/>
</dbReference>
<dbReference type="EMBL" id="BT011459">
    <property type="protein sequence ID" value="AAR99117.1"/>
    <property type="molecule type" value="mRNA"/>
</dbReference>
<dbReference type="EMBL" id="BT015269">
    <property type="protein sequence ID" value="AAT94498.1"/>
    <property type="molecule type" value="mRNA"/>
</dbReference>
<dbReference type="PIR" id="A42695">
    <property type="entry name" value="A42695"/>
</dbReference>
<dbReference type="RefSeq" id="NP_001260349.1">
    <property type="nucleotide sequence ID" value="NM_001273420.1"/>
</dbReference>
<dbReference type="RefSeq" id="NP_476888.1">
    <property type="nucleotide sequence ID" value="NM_057540.4"/>
</dbReference>
<dbReference type="SMR" id="P29052"/>
<dbReference type="BioGRID" id="60511">
    <property type="interactions" value="18"/>
</dbReference>
<dbReference type="DIP" id="DIP-17603N"/>
<dbReference type="FunCoup" id="P29052">
    <property type="interactions" value="1886"/>
</dbReference>
<dbReference type="IntAct" id="P29052">
    <property type="interactions" value="3"/>
</dbReference>
<dbReference type="STRING" id="7227.FBpp0305673"/>
<dbReference type="PaxDb" id="7227-FBpp0305673"/>
<dbReference type="DNASU" id="34430"/>
<dbReference type="EnsemblMetazoa" id="FBtr0080025">
    <property type="protein sequence ID" value="FBpp0079615"/>
    <property type="gene ID" value="FBgn0004915"/>
</dbReference>
<dbReference type="EnsemblMetazoa" id="FBtr0333489">
    <property type="protein sequence ID" value="FBpp0305673"/>
    <property type="gene ID" value="FBgn0004915"/>
</dbReference>
<dbReference type="GeneID" id="34430"/>
<dbReference type="KEGG" id="dme:Dmel_CG5193"/>
<dbReference type="AGR" id="FB:FBgn0004915"/>
<dbReference type="CTD" id="34430"/>
<dbReference type="FlyBase" id="FBgn0004915">
    <property type="gene designation" value="TfIIB"/>
</dbReference>
<dbReference type="VEuPathDB" id="VectorBase:FBgn0004915"/>
<dbReference type="eggNOG" id="KOG1597">
    <property type="taxonomic scope" value="Eukaryota"/>
</dbReference>
<dbReference type="GeneTree" id="ENSGT00390000006671"/>
<dbReference type="HOGENOM" id="CLU_043736_1_1_1"/>
<dbReference type="InParanoid" id="P29052"/>
<dbReference type="OMA" id="DHDQRMK"/>
<dbReference type="OrthoDB" id="25790at2759"/>
<dbReference type="PhylomeDB" id="P29052"/>
<dbReference type="Reactome" id="R-DME-674695">
    <property type="pathway name" value="RNA Polymerase II Pre-transcription Events"/>
</dbReference>
<dbReference type="Reactome" id="R-DME-6807505">
    <property type="pathway name" value="RNA polymerase II transcribes snRNA genes"/>
</dbReference>
<dbReference type="Reactome" id="R-DME-73776">
    <property type="pathway name" value="RNA Polymerase II Promoter Escape"/>
</dbReference>
<dbReference type="Reactome" id="R-DME-73779">
    <property type="pathway name" value="RNA Polymerase II Transcription Pre-Initiation And Promoter Opening"/>
</dbReference>
<dbReference type="Reactome" id="R-DME-75953">
    <property type="pathway name" value="RNA Polymerase II Transcription Initiation"/>
</dbReference>
<dbReference type="Reactome" id="R-DME-76042">
    <property type="pathway name" value="RNA Polymerase II Transcription Initiation And Promoter Clearance"/>
</dbReference>
<dbReference type="SignaLink" id="P29052"/>
<dbReference type="BioGRID-ORCS" id="34430">
    <property type="hits" value="1 hit in 1 CRISPR screen"/>
</dbReference>
<dbReference type="GenomeRNAi" id="34430"/>
<dbReference type="PRO" id="PR:P29052"/>
<dbReference type="Proteomes" id="UP000000803">
    <property type="component" value="Chromosome 2L"/>
</dbReference>
<dbReference type="Bgee" id="FBgn0004915">
    <property type="expression patterns" value="Expressed in cleaving embryo and 121 other cell types or tissues"/>
</dbReference>
<dbReference type="ExpressionAtlas" id="P29052">
    <property type="expression patterns" value="baseline and differential"/>
</dbReference>
<dbReference type="GO" id="GO:0005634">
    <property type="term" value="C:nucleus"/>
    <property type="evidence" value="ECO:0000314"/>
    <property type="project" value="FlyBase"/>
</dbReference>
<dbReference type="GO" id="GO:0097550">
    <property type="term" value="C:transcription preinitiation complex"/>
    <property type="evidence" value="ECO:0000318"/>
    <property type="project" value="GO_Central"/>
</dbReference>
<dbReference type="GO" id="GO:0016407">
    <property type="term" value="F:acetyltransferase activity"/>
    <property type="evidence" value="ECO:0000250"/>
    <property type="project" value="FlyBase"/>
</dbReference>
<dbReference type="GO" id="GO:0016251">
    <property type="term" value="F:RNA polymerase II general transcription initiation factor activity"/>
    <property type="evidence" value="ECO:0000318"/>
    <property type="project" value="GO_Central"/>
</dbReference>
<dbReference type="GO" id="GO:0017025">
    <property type="term" value="F:TBP-class protein binding"/>
    <property type="evidence" value="ECO:0000353"/>
    <property type="project" value="FlyBase"/>
</dbReference>
<dbReference type="GO" id="GO:0008270">
    <property type="term" value="F:zinc ion binding"/>
    <property type="evidence" value="ECO:0007669"/>
    <property type="project" value="UniProtKB-KW"/>
</dbReference>
<dbReference type="GO" id="GO:0006352">
    <property type="term" value="P:DNA-templated transcription initiation"/>
    <property type="evidence" value="ECO:0000318"/>
    <property type="project" value="GO_Central"/>
</dbReference>
<dbReference type="GO" id="GO:0042789">
    <property type="term" value="P:mRNA transcription by RNA polymerase II"/>
    <property type="evidence" value="ECO:0000314"/>
    <property type="project" value="FlyBase"/>
</dbReference>
<dbReference type="GO" id="GO:0051123">
    <property type="term" value="P:RNA polymerase II preinitiation complex assembly"/>
    <property type="evidence" value="ECO:0000318"/>
    <property type="project" value="GO_Central"/>
</dbReference>
<dbReference type="GO" id="GO:0006367">
    <property type="term" value="P:transcription initiation at RNA polymerase II promoter"/>
    <property type="evidence" value="ECO:0000250"/>
    <property type="project" value="FlyBase"/>
</dbReference>
<dbReference type="GO" id="GO:0001174">
    <property type="term" value="P:transcriptional start site selection at RNA polymerase II promoter"/>
    <property type="evidence" value="ECO:0000314"/>
    <property type="project" value="FlyBase"/>
</dbReference>
<dbReference type="CDD" id="cd20551">
    <property type="entry name" value="CYCLIN_TFIIB_rpt1"/>
    <property type="match status" value="1"/>
</dbReference>
<dbReference type="CDD" id="cd20552">
    <property type="entry name" value="CYCLIN_TFIIB_rpt2"/>
    <property type="match status" value="1"/>
</dbReference>
<dbReference type="FunFam" id="1.10.472.10:FF:000008">
    <property type="entry name" value="Transcription initiation factor IIB"/>
    <property type="match status" value="1"/>
</dbReference>
<dbReference type="FunFam" id="2.20.25.10:FF:000007">
    <property type="entry name" value="Transcription initiation factor IIB"/>
    <property type="match status" value="1"/>
</dbReference>
<dbReference type="FunFam" id="1.10.472.10:FF:000019">
    <property type="entry name" value="transcription initiation factor IIB"/>
    <property type="match status" value="1"/>
</dbReference>
<dbReference type="Gene3D" id="2.20.25.10">
    <property type="match status" value="1"/>
</dbReference>
<dbReference type="Gene3D" id="1.10.472.10">
    <property type="entry name" value="Cyclin-like"/>
    <property type="match status" value="2"/>
</dbReference>
<dbReference type="InterPro" id="IPR013763">
    <property type="entry name" value="Cyclin-like_dom"/>
</dbReference>
<dbReference type="InterPro" id="IPR036915">
    <property type="entry name" value="Cyclin-like_sf"/>
</dbReference>
<dbReference type="InterPro" id="IPR000812">
    <property type="entry name" value="TFIIB"/>
</dbReference>
<dbReference type="InterPro" id="IPR023486">
    <property type="entry name" value="TFIIB_CS"/>
</dbReference>
<dbReference type="InterPro" id="IPR013150">
    <property type="entry name" value="TFIIB_cyclin"/>
</dbReference>
<dbReference type="InterPro" id="IPR013137">
    <property type="entry name" value="Znf_TFIIB"/>
</dbReference>
<dbReference type="PANTHER" id="PTHR11618:SF13">
    <property type="entry name" value="TRANSCRIPTION INITIATION FACTOR IIB"/>
    <property type="match status" value="1"/>
</dbReference>
<dbReference type="PANTHER" id="PTHR11618">
    <property type="entry name" value="TRANSCRIPTION INITIATION FACTOR IIB-RELATED"/>
    <property type="match status" value="1"/>
</dbReference>
<dbReference type="Pfam" id="PF00382">
    <property type="entry name" value="TFIIB"/>
    <property type="match status" value="2"/>
</dbReference>
<dbReference type="Pfam" id="PF08271">
    <property type="entry name" value="Zn_Ribbon_TF"/>
    <property type="match status" value="1"/>
</dbReference>
<dbReference type="PRINTS" id="PR00685">
    <property type="entry name" value="TIFACTORIIB"/>
</dbReference>
<dbReference type="SMART" id="SM00385">
    <property type="entry name" value="CYCLIN"/>
    <property type="match status" value="2"/>
</dbReference>
<dbReference type="SUPFAM" id="SSF47954">
    <property type="entry name" value="Cyclin-like"/>
    <property type="match status" value="2"/>
</dbReference>
<dbReference type="SUPFAM" id="SSF57783">
    <property type="entry name" value="Zinc beta-ribbon"/>
    <property type="match status" value="1"/>
</dbReference>
<dbReference type="PROSITE" id="PS00782">
    <property type="entry name" value="TFIIB"/>
    <property type="match status" value="2"/>
</dbReference>
<dbReference type="PROSITE" id="PS51134">
    <property type="entry name" value="ZF_TFIIB"/>
    <property type="match status" value="1"/>
</dbReference>
<organism>
    <name type="scientific">Drosophila melanogaster</name>
    <name type="common">Fruit fly</name>
    <dbReference type="NCBI Taxonomy" id="7227"/>
    <lineage>
        <taxon>Eukaryota</taxon>
        <taxon>Metazoa</taxon>
        <taxon>Ecdysozoa</taxon>
        <taxon>Arthropoda</taxon>
        <taxon>Hexapoda</taxon>
        <taxon>Insecta</taxon>
        <taxon>Pterygota</taxon>
        <taxon>Neoptera</taxon>
        <taxon>Endopterygota</taxon>
        <taxon>Diptera</taxon>
        <taxon>Brachycera</taxon>
        <taxon>Muscomorpha</taxon>
        <taxon>Ephydroidea</taxon>
        <taxon>Drosophilidae</taxon>
        <taxon>Drosophila</taxon>
        <taxon>Sophophora</taxon>
    </lineage>
</organism>
<evidence type="ECO:0000255" key="1">
    <source>
        <dbReference type="PROSITE-ProRule" id="PRU00469"/>
    </source>
</evidence>
<evidence type="ECO:0000305" key="2"/>
<name>TF2B_DROME</name>
<proteinExistence type="evidence at transcript level"/>
<reference key="1">
    <citation type="journal article" date="1992" name="Proc. Natl. Acad. Sci. U.S.A.">
        <title>Isolation and characterization of a cDNA encoding Drosophila transcription factor TFIIB.</title>
        <authorList>
            <person name="Yamashita S."/>
            <person name="Wada K."/>
            <person name="Horikoshi M."/>
            <person name="Gong D.W."/>
            <person name="Kokubo T."/>
            <person name="Hisatake K."/>
            <person name="Yokotani N."/>
            <person name="Malik S."/>
            <person name="Roeder R.G."/>
            <person name="Nakatani Y."/>
        </authorList>
    </citation>
    <scope>NUCLEOTIDE SEQUENCE [MRNA]</scope>
</reference>
<reference key="2">
    <citation type="journal article" date="1992" name="Genes Dev.">
        <title>Functional analysis of Drosophila transcription factor IIB.</title>
        <authorList>
            <person name="Wampler S.L."/>
            <person name="Kadonaga J.T."/>
        </authorList>
    </citation>
    <scope>NUCLEOTIDE SEQUENCE [MRNA]</scope>
</reference>
<reference key="3">
    <citation type="submission" date="1993-10" db="EMBL/GenBank/DDBJ databases">
        <authorList>
            <person name="Lira-Devito L.M."/>
            <person name="Kadonaga J.T."/>
        </authorList>
    </citation>
    <scope>NUCLEOTIDE SEQUENCE [GENOMIC DNA]</scope>
    <source>
        <strain>Canton-S</strain>
    </source>
</reference>
<reference key="4">
    <citation type="submission" date="1995-08" db="EMBL/GenBank/DDBJ databases">
        <authorList>
            <person name="Yoon J."/>
            <person name="Oh Y."/>
            <person name="Lee K."/>
            <person name="Baek K."/>
        </authorList>
    </citation>
    <scope>NUCLEOTIDE SEQUENCE [GENOMIC DNA]</scope>
    <source>
        <strain>Oregon-R</strain>
    </source>
</reference>
<reference key="5">
    <citation type="journal article" date="2000" name="Science">
        <title>The genome sequence of Drosophila melanogaster.</title>
        <authorList>
            <person name="Adams M.D."/>
            <person name="Celniker S.E."/>
            <person name="Holt R.A."/>
            <person name="Evans C.A."/>
            <person name="Gocayne J.D."/>
            <person name="Amanatides P.G."/>
            <person name="Scherer S.E."/>
            <person name="Li P.W."/>
            <person name="Hoskins R.A."/>
            <person name="Galle R.F."/>
            <person name="George R.A."/>
            <person name="Lewis S.E."/>
            <person name="Richards S."/>
            <person name="Ashburner M."/>
            <person name="Henderson S.N."/>
            <person name="Sutton G.G."/>
            <person name="Wortman J.R."/>
            <person name="Yandell M.D."/>
            <person name="Zhang Q."/>
            <person name="Chen L.X."/>
            <person name="Brandon R.C."/>
            <person name="Rogers Y.-H.C."/>
            <person name="Blazej R.G."/>
            <person name="Champe M."/>
            <person name="Pfeiffer B.D."/>
            <person name="Wan K.H."/>
            <person name="Doyle C."/>
            <person name="Baxter E.G."/>
            <person name="Helt G."/>
            <person name="Nelson C.R."/>
            <person name="Miklos G.L.G."/>
            <person name="Abril J.F."/>
            <person name="Agbayani A."/>
            <person name="An H.-J."/>
            <person name="Andrews-Pfannkoch C."/>
            <person name="Baldwin D."/>
            <person name="Ballew R.M."/>
            <person name="Basu A."/>
            <person name="Baxendale J."/>
            <person name="Bayraktaroglu L."/>
            <person name="Beasley E.M."/>
            <person name="Beeson K.Y."/>
            <person name="Benos P.V."/>
            <person name="Berman B.P."/>
            <person name="Bhandari D."/>
            <person name="Bolshakov S."/>
            <person name="Borkova D."/>
            <person name="Botchan M.R."/>
            <person name="Bouck J."/>
            <person name="Brokstein P."/>
            <person name="Brottier P."/>
            <person name="Burtis K.C."/>
            <person name="Busam D.A."/>
            <person name="Butler H."/>
            <person name="Cadieu E."/>
            <person name="Center A."/>
            <person name="Chandra I."/>
            <person name="Cherry J.M."/>
            <person name="Cawley S."/>
            <person name="Dahlke C."/>
            <person name="Davenport L.B."/>
            <person name="Davies P."/>
            <person name="de Pablos B."/>
            <person name="Delcher A."/>
            <person name="Deng Z."/>
            <person name="Mays A.D."/>
            <person name="Dew I."/>
            <person name="Dietz S.M."/>
            <person name="Dodson K."/>
            <person name="Doup L.E."/>
            <person name="Downes M."/>
            <person name="Dugan-Rocha S."/>
            <person name="Dunkov B.C."/>
            <person name="Dunn P."/>
            <person name="Durbin K.J."/>
            <person name="Evangelista C.C."/>
            <person name="Ferraz C."/>
            <person name="Ferriera S."/>
            <person name="Fleischmann W."/>
            <person name="Fosler C."/>
            <person name="Gabrielian A.E."/>
            <person name="Garg N.S."/>
            <person name="Gelbart W.M."/>
            <person name="Glasser K."/>
            <person name="Glodek A."/>
            <person name="Gong F."/>
            <person name="Gorrell J.H."/>
            <person name="Gu Z."/>
            <person name="Guan P."/>
            <person name="Harris M."/>
            <person name="Harris N.L."/>
            <person name="Harvey D.A."/>
            <person name="Heiman T.J."/>
            <person name="Hernandez J.R."/>
            <person name="Houck J."/>
            <person name="Hostin D."/>
            <person name="Houston K.A."/>
            <person name="Howland T.J."/>
            <person name="Wei M.-H."/>
            <person name="Ibegwam C."/>
            <person name="Jalali M."/>
            <person name="Kalush F."/>
            <person name="Karpen G.H."/>
            <person name="Ke Z."/>
            <person name="Kennison J.A."/>
            <person name="Ketchum K.A."/>
            <person name="Kimmel B.E."/>
            <person name="Kodira C.D."/>
            <person name="Kraft C.L."/>
            <person name="Kravitz S."/>
            <person name="Kulp D."/>
            <person name="Lai Z."/>
            <person name="Lasko P."/>
            <person name="Lei Y."/>
            <person name="Levitsky A.A."/>
            <person name="Li J.H."/>
            <person name="Li Z."/>
            <person name="Liang Y."/>
            <person name="Lin X."/>
            <person name="Liu X."/>
            <person name="Mattei B."/>
            <person name="McIntosh T.C."/>
            <person name="McLeod M.P."/>
            <person name="McPherson D."/>
            <person name="Merkulov G."/>
            <person name="Milshina N.V."/>
            <person name="Mobarry C."/>
            <person name="Morris J."/>
            <person name="Moshrefi A."/>
            <person name="Mount S.M."/>
            <person name="Moy M."/>
            <person name="Murphy B."/>
            <person name="Murphy L."/>
            <person name="Muzny D.M."/>
            <person name="Nelson D.L."/>
            <person name="Nelson D.R."/>
            <person name="Nelson K.A."/>
            <person name="Nixon K."/>
            <person name="Nusskern D.R."/>
            <person name="Pacleb J.M."/>
            <person name="Palazzolo M."/>
            <person name="Pittman G.S."/>
            <person name="Pan S."/>
            <person name="Pollard J."/>
            <person name="Puri V."/>
            <person name="Reese M.G."/>
            <person name="Reinert K."/>
            <person name="Remington K."/>
            <person name="Saunders R.D.C."/>
            <person name="Scheeler F."/>
            <person name="Shen H."/>
            <person name="Shue B.C."/>
            <person name="Siden-Kiamos I."/>
            <person name="Simpson M."/>
            <person name="Skupski M.P."/>
            <person name="Smith T.J."/>
            <person name="Spier E."/>
            <person name="Spradling A.C."/>
            <person name="Stapleton M."/>
            <person name="Strong R."/>
            <person name="Sun E."/>
            <person name="Svirskas R."/>
            <person name="Tector C."/>
            <person name="Turner R."/>
            <person name="Venter E."/>
            <person name="Wang A.H."/>
            <person name="Wang X."/>
            <person name="Wang Z.-Y."/>
            <person name="Wassarman D.A."/>
            <person name="Weinstock G.M."/>
            <person name="Weissenbach J."/>
            <person name="Williams S.M."/>
            <person name="Woodage T."/>
            <person name="Worley K.C."/>
            <person name="Wu D."/>
            <person name="Yang S."/>
            <person name="Yao Q.A."/>
            <person name="Ye J."/>
            <person name="Yeh R.-F."/>
            <person name="Zaveri J.S."/>
            <person name="Zhan M."/>
            <person name="Zhang G."/>
            <person name="Zhao Q."/>
            <person name="Zheng L."/>
            <person name="Zheng X.H."/>
            <person name="Zhong F.N."/>
            <person name="Zhong W."/>
            <person name="Zhou X."/>
            <person name="Zhu S.C."/>
            <person name="Zhu X."/>
            <person name="Smith H.O."/>
            <person name="Gibbs R.A."/>
            <person name="Myers E.W."/>
            <person name="Rubin G.M."/>
            <person name="Venter J.C."/>
        </authorList>
    </citation>
    <scope>NUCLEOTIDE SEQUENCE [LARGE SCALE GENOMIC DNA]</scope>
    <source>
        <strain>Berkeley</strain>
    </source>
</reference>
<reference key="6">
    <citation type="journal article" date="2002" name="Genome Biol.">
        <title>Annotation of the Drosophila melanogaster euchromatic genome: a systematic review.</title>
        <authorList>
            <person name="Misra S."/>
            <person name="Crosby M.A."/>
            <person name="Mungall C.J."/>
            <person name="Matthews B.B."/>
            <person name="Campbell K.S."/>
            <person name="Hradecky P."/>
            <person name="Huang Y."/>
            <person name="Kaminker J.S."/>
            <person name="Millburn G.H."/>
            <person name="Prochnik S.E."/>
            <person name="Smith C.D."/>
            <person name="Tupy J.L."/>
            <person name="Whitfield E.J."/>
            <person name="Bayraktaroglu L."/>
            <person name="Berman B.P."/>
            <person name="Bettencourt B.R."/>
            <person name="Celniker S.E."/>
            <person name="de Grey A.D.N.J."/>
            <person name="Drysdale R.A."/>
            <person name="Harris N.L."/>
            <person name="Richter J."/>
            <person name="Russo S."/>
            <person name="Schroeder A.J."/>
            <person name="Shu S.Q."/>
            <person name="Stapleton M."/>
            <person name="Yamada C."/>
            <person name="Ashburner M."/>
            <person name="Gelbart W.M."/>
            <person name="Rubin G.M."/>
            <person name="Lewis S.E."/>
        </authorList>
    </citation>
    <scope>GENOME REANNOTATION</scope>
    <source>
        <strain>Berkeley</strain>
    </source>
</reference>
<reference key="7">
    <citation type="submission" date="2006-01" db="EMBL/GenBank/DDBJ databases">
        <authorList>
            <person name="Stapleton M."/>
            <person name="Carlson J.W."/>
            <person name="Chavez C."/>
            <person name="Frise E."/>
            <person name="George R.A."/>
            <person name="Pacleb J.M."/>
            <person name="Park S."/>
            <person name="Wan K.H."/>
            <person name="Yu C."/>
            <person name="Rubin G.M."/>
            <person name="Celniker S.E."/>
        </authorList>
    </citation>
    <scope>NUCLEOTIDE SEQUENCE [LARGE SCALE MRNA]</scope>
    <source>
        <strain>Berkeley</strain>
        <tissue>Embryo</tissue>
    </source>
</reference>
<comment type="function">
    <text>General factor that plays a major role in the activation of eukaryotic genes transcribed by RNA polymerase II.</text>
</comment>
<comment type="subunit">
    <text>Belongs to the TFIID complex which is composed of TATA binding protein (Tbp) and a number of TBP-associated factors (Tafs). Associates with TFIID-IIA (DA complex) to form TFIID-IIA-IIB (DAB-complex) which is then recognized by polymerase II.</text>
</comment>
<comment type="subcellular location">
    <subcellularLocation>
        <location>Nucleus</location>
    </subcellularLocation>
</comment>
<comment type="similarity">
    <text evidence="2">Belongs to the TFIIB family.</text>
</comment>
<accession>P29052</accession>
<accession>Q6AWH9</accession>
<accession>Q9VKV7</accession>
<gene>
    <name type="primary">TfIIB</name>
    <name type="ORF">CG5193</name>
</gene>